<sequence>MGSATLLKESGPREVFCGLTSIVWLHRRMPDAFFLVVGSRTCAHLIQSAAGVMIFAEPRFGTAILGEKDLAGLADAHDELDRVVNDLLARRPEIRTLFLVGSCPSEVIKLDLARVAERLNGELQGRVRVLNYSGSGIETTFTQGEDGALKAMVPLMPNSNEAQLLLVGTMANAVEDRLIHLFERLGIPSVSSLPPRQSTDLPSVGPGTRVLLTQPYLTDTARELKDRGAEILQAPFPLGAEGSRLWMEAAAKAFGINNNHVANTLAPLIERAQKALSPYKEQLAGKRIFLMPESQLEIPLARFLHRECGMELVEVGVPYLNREMMQSELELLPQNTPVMEGQHVEKQLDRVREQRPDLVVCGMGLANPLEAEEIATKWSIELIFSPIHGIDQAADLAELFARPLHRRNLLNNQLLVSV</sequence>
<proteinExistence type="inferred from homology"/>
<evidence type="ECO:0000255" key="1">
    <source>
        <dbReference type="HAMAP-Rule" id="MF_00352"/>
    </source>
</evidence>
<reference key="1">
    <citation type="journal article" date="2003" name="Nature">
        <title>Genome divergence in two Prochlorococcus ecotypes reflects oceanic niche differentiation.</title>
        <authorList>
            <person name="Rocap G."/>
            <person name="Larimer F.W."/>
            <person name="Lamerdin J.E."/>
            <person name="Malfatti S."/>
            <person name="Chain P."/>
            <person name="Ahlgren N.A."/>
            <person name="Arellano A."/>
            <person name="Coleman M."/>
            <person name="Hauser L."/>
            <person name="Hess W.R."/>
            <person name="Johnson Z.I."/>
            <person name="Land M.L."/>
            <person name="Lindell D."/>
            <person name="Post A.F."/>
            <person name="Regala W."/>
            <person name="Shah M."/>
            <person name="Shaw S.L."/>
            <person name="Steglich C."/>
            <person name="Sullivan M.B."/>
            <person name="Ting C.S."/>
            <person name="Tolonen A."/>
            <person name="Webb E.A."/>
            <person name="Zinser E.R."/>
            <person name="Chisholm S.W."/>
        </authorList>
    </citation>
    <scope>NUCLEOTIDE SEQUENCE [LARGE SCALE GENOMIC DNA]</scope>
    <source>
        <strain>MIT 9313</strain>
    </source>
</reference>
<name>CHLN_PROMM</name>
<comment type="function">
    <text evidence="1">Component of the dark-operative protochlorophyllide reductase (DPOR) that uses Mg-ATP and reduced ferredoxin to reduce ring D of protochlorophyllide (Pchlide) to form chlorophyllide a (Chlide). This reaction is light-independent. The NB-protein (ChlN-ChlB) is the catalytic component of the complex.</text>
</comment>
<comment type="catalytic activity">
    <reaction evidence="1">
        <text>chlorophyllide a + oxidized 2[4Fe-4S]-[ferredoxin] + 2 ADP + 2 phosphate = protochlorophyllide a + reduced 2[4Fe-4S]-[ferredoxin] + 2 ATP + 2 H2O</text>
        <dbReference type="Rhea" id="RHEA:28202"/>
        <dbReference type="Rhea" id="RHEA-COMP:10002"/>
        <dbReference type="Rhea" id="RHEA-COMP:10004"/>
        <dbReference type="ChEBI" id="CHEBI:15377"/>
        <dbReference type="ChEBI" id="CHEBI:30616"/>
        <dbReference type="ChEBI" id="CHEBI:33722"/>
        <dbReference type="ChEBI" id="CHEBI:33723"/>
        <dbReference type="ChEBI" id="CHEBI:43474"/>
        <dbReference type="ChEBI" id="CHEBI:83348"/>
        <dbReference type="ChEBI" id="CHEBI:83350"/>
        <dbReference type="ChEBI" id="CHEBI:456216"/>
        <dbReference type="EC" id="1.3.7.7"/>
    </reaction>
</comment>
<comment type="cofactor">
    <cofactor evidence="1">
        <name>[4Fe-4S] cluster</name>
        <dbReference type="ChEBI" id="CHEBI:49883"/>
    </cofactor>
    <text evidence="1">Binds 1 [4Fe-4S] cluster per heterodimer. The cluster is bound at the heterodimer interface by residues from both subunits.</text>
</comment>
<comment type="pathway">
    <text evidence="1">Porphyrin-containing compound metabolism; chlorophyll biosynthesis (light-independent).</text>
</comment>
<comment type="subunit">
    <text evidence="1">Protochlorophyllide reductase is composed of three subunits; ChlL, ChlN and ChlB. Forms a heterotetramer of two ChlB and two ChlN subunits.</text>
</comment>
<comment type="similarity">
    <text evidence="1">Belongs to the BchN/ChlN family.</text>
</comment>
<feature type="chain" id="PRO_0000324014" description="Light-independent protochlorophyllide reductase subunit N">
    <location>
        <begin position="1"/>
        <end position="418"/>
    </location>
</feature>
<feature type="binding site" evidence="1">
    <location>
        <position position="17"/>
    </location>
    <ligand>
        <name>[4Fe-4S] cluster</name>
        <dbReference type="ChEBI" id="CHEBI:49883"/>
        <note>ligand shared with heterodimeric partner</note>
    </ligand>
</feature>
<feature type="binding site" evidence="1">
    <location>
        <position position="42"/>
    </location>
    <ligand>
        <name>[4Fe-4S] cluster</name>
        <dbReference type="ChEBI" id="CHEBI:49883"/>
        <note>ligand shared with heterodimeric partner</note>
    </ligand>
</feature>
<feature type="binding site" evidence="1">
    <location>
        <position position="103"/>
    </location>
    <ligand>
        <name>[4Fe-4S] cluster</name>
        <dbReference type="ChEBI" id="CHEBI:49883"/>
        <note>ligand shared with heterodimeric partner</note>
    </ligand>
</feature>
<protein>
    <recommendedName>
        <fullName evidence="1">Light-independent protochlorophyllide reductase subunit N</fullName>
        <shortName evidence="1">DPOR subunit N</shortName>
        <shortName evidence="1">LI-POR subunit N</shortName>
        <ecNumber evidence="1">1.3.7.7</ecNumber>
    </recommendedName>
</protein>
<dbReference type="EC" id="1.3.7.7" evidence="1"/>
<dbReference type="EMBL" id="BX548175">
    <property type="protein sequence ID" value="CAE21390.1"/>
    <property type="molecule type" value="Genomic_DNA"/>
</dbReference>
<dbReference type="RefSeq" id="WP_011130585.1">
    <property type="nucleotide sequence ID" value="NC_005071.1"/>
</dbReference>
<dbReference type="SMR" id="Q7V6E9"/>
<dbReference type="KEGG" id="pmt:PMT_1215"/>
<dbReference type="eggNOG" id="COG2710">
    <property type="taxonomic scope" value="Bacteria"/>
</dbReference>
<dbReference type="HOGENOM" id="CLU_037170_0_0_3"/>
<dbReference type="OrthoDB" id="5714774at2"/>
<dbReference type="UniPathway" id="UPA00670"/>
<dbReference type="Proteomes" id="UP000001423">
    <property type="component" value="Chromosome"/>
</dbReference>
<dbReference type="GO" id="GO:0051539">
    <property type="term" value="F:4 iron, 4 sulfur cluster binding"/>
    <property type="evidence" value="ECO:0007669"/>
    <property type="project" value="UniProtKB-UniRule"/>
</dbReference>
<dbReference type="GO" id="GO:0005524">
    <property type="term" value="F:ATP binding"/>
    <property type="evidence" value="ECO:0007669"/>
    <property type="project" value="UniProtKB-UniRule"/>
</dbReference>
<dbReference type="GO" id="GO:0046872">
    <property type="term" value="F:metal ion binding"/>
    <property type="evidence" value="ECO:0007669"/>
    <property type="project" value="UniProtKB-KW"/>
</dbReference>
<dbReference type="GO" id="GO:0016730">
    <property type="term" value="F:oxidoreductase activity, acting on iron-sulfur proteins as donors"/>
    <property type="evidence" value="ECO:0007669"/>
    <property type="project" value="InterPro"/>
</dbReference>
<dbReference type="GO" id="GO:0016636">
    <property type="term" value="F:oxidoreductase activity, acting on the CH-CH group of donors, iron-sulfur protein as acceptor"/>
    <property type="evidence" value="ECO:0007669"/>
    <property type="project" value="UniProtKB-UniRule"/>
</dbReference>
<dbReference type="GO" id="GO:0036068">
    <property type="term" value="P:light-independent chlorophyll biosynthetic process"/>
    <property type="evidence" value="ECO:0007669"/>
    <property type="project" value="UniProtKB-UniRule"/>
</dbReference>
<dbReference type="GO" id="GO:0019685">
    <property type="term" value="P:photosynthesis, dark reaction"/>
    <property type="evidence" value="ECO:0007669"/>
    <property type="project" value="InterPro"/>
</dbReference>
<dbReference type="CDD" id="cd01979">
    <property type="entry name" value="Pchlide_reductase_N"/>
    <property type="match status" value="1"/>
</dbReference>
<dbReference type="Gene3D" id="3.40.50.1980">
    <property type="entry name" value="Nitrogenase molybdenum iron protein domain"/>
    <property type="match status" value="3"/>
</dbReference>
<dbReference type="HAMAP" id="MF_00352">
    <property type="entry name" value="ChlN_BchN"/>
    <property type="match status" value="1"/>
</dbReference>
<dbReference type="InterPro" id="IPR050293">
    <property type="entry name" value="LIPOR_BchN/ChlN"/>
</dbReference>
<dbReference type="InterPro" id="IPR000510">
    <property type="entry name" value="Nase/OxRdtase_comp1"/>
</dbReference>
<dbReference type="InterPro" id="IPR005970">
    <property type="entry name" value="Protochl_reductN"/>
</dbReference>
<dbReference type="NCBIfam" id="TIGR01279">
    <property type="entry name" value="DPOR_bchN"/>
    <property type="match status" value="1"/>
</dbReference>
<dbReference type="NCBIfam" id="NF002768">
    <property type="entry name" value="PRK02842.1"/>
    <property type="match status" value="1"/>
</dbReference>
<dbReference type="PANTHER" id="PTHR39429">
    <property type="entry name" value="LIGHT-INDEPENDENT PROTOCHLOROPHYLLIDE REDUCTASE SUBUNIT N"/>
    <property type="match status" value="1"/>
</dbReference>
<dbReference type="PANTHER" id="PTHR39429:SF3">
    <property type="entry name" value="LIGHT-INDEPENDENT PROTOCHLOROPHYLLIDE REDUCTASE SUBUNIT N"/>
    <property type="match status" value="1"/>
</dbReference>
<dbReference type="Pfam" id="PF00148">
    <property type="entry name" value="Oxidored_nitro"/>
    <property type="match status" value="1"/>
</dbReference>
<dbReference type="PIRSF" id="PIRSF000162">
    <property type="entry name" value="P_chlorophyll_rd"/>
    <property type="match status" value="1"/>
</dbReference>
<dbReference type="SUPFAM" id="SSF53807">
    <property type="entry name" value="Helical backbone' metal receptor"/>
    <property type="match status" value="1"/>
</dbReference>
<organism>
    <name type="scientific">Prochlorococcus marinus (strain MIT 9313)</name>
    <dbReference type="NCBI Taxonomy" id="74547"/>
    <lineage>
        <taxon>Bacteria</taxon>
        <taxon>Bacillati</taxon>
        <taxon>Cyanobacteriota</taxon>
        <taxon>Cyanophyceae</taxon>
        <taxon>Synechococcales</taxon>
        <taxon>Prochlorococcaceae</taxon>
        <taxon>Prochlorococcus</taxon>
    </lineage>
</organism>
<keyword id="KW-0004">4Fe-4S</keyword>
<keyword id="KW-0067">ATP-binding</keyword>
<keyword id="KW-0149">Chlorophyll biosynthesis</keyword>
<keyword id="KW-0408">Iron</keyword>
<keyword id="KW-0411">Iron-sulfur</keyword>
<keyword id="KW-0479">Metal-binding</keyword>
<keyword id="KW-0547">Nucleotide-binding</keyword>
<keyword id="KW-0560">Oxidoreductase</keyword>
<keyword id="KW-0602">Photosynthesis</keyword>
<keyword id="KW-1185">Reference proteome</keyword>
<accession>Q7V6E9</accession>
<gene>
    <name evidence="1" type="primary">chlN</name>
    <name type="ordered locus">PMT_1215</name>
</gene>